<accession>Q1CLS2</accession>
<accession>C4GPR6</accession>
<comment type="function">
    <text evidence="1">Multifunctional enzyme that catalyzes the SAM-dependent methylations of uroporphyrinogen III at position C-2 and C-7 to form precorrin-2 via precorrin-1. Then it catalyzes the NAD-dependent ring dehydrogenation of precorrin-2 to yield sirohydrochlorin. Finally, it catalyzes the ferrochelation of sirohydrochlorin to yield siroheme.</text>
</comment>
<comment type="catalytic activity">
    <reaction evidence="1">
        <text>uroporphyrinogen III + 2 S-adenosyl-L-methionine = precorrin-2 + 2 S-adenosyl-L-homocysteine + H(+)</text>
        <dbReference type="Rhea" id="RHEA:32459"/>
        <dbReference type="ChEBI" id="CHEBI:15378"/>
        <dbReference type="ChEBI" id="CHEBI:57308"/>
        <dbReference type="ChEBI" id="CHEBI:57856"/>
        <dbReference type="ChEBI" id="CHEBI:58827"/>
        <dbReference type="ChEBI" id="CHEBI:59789"/>
        <dbReference type="EC" id="2.1.1.107"/>
    </reaction>
</comment>
<comment type="catalytic activity">
    <reaction evidence="1">
        <text>precorrin-2 + NAD(+) = sirohydrochlorin + NADH + 2 H(+)</text>
        <dbReference type="Rhea" id="RHEA:15613"/>
        <dbReference type="ChEBI" id="CHEBI:15378"/>
        <dbReference type="ChEBI" id="CHEBI:57540"/>
        <dbReference type="ChEBI" id="CHEBI:57945"/>
        <dbReference type="ChEBI" id="CHEBI:58351"/>
        <dbReference type="ChEBI" id="CHEBI:58827"/>
        <dbReference type="EC" id="1.3.1.76"/>
    </reaction>
</comment>
<comment type="catalytic activity">
    <reaction evidence="1">
        <text>siroheme + 2 H(+) = sirohydrochlorin + Fe(2+)</text>
        <dbReference type="Rhea" id="RHEA:24360"/>
        <dbReference type="ChEBI" id="CHEBI:15378"/>
        <dbReference type="ChEBI" id="CHEBI:29033"/>
        <dbReference type="ChEBI" id="CHEBI:58351"/>
        <dbReference type="ChEBI" id="CHEBI:60052"/>
        <dbReference type="EC" id="4.99.1.4"/>
    </reaction>
</comment>
<comment type="pathway">
    <text evidence="1">Cofactor biosynthesis; adenosylcobalamin biosynthesis; precorrin-2 from uroporphyrinogen III: step 1/1.</text>
</comment>
<comment type="pathway">
    <text evidence="1">Cofactor biosynthesis; adenosylcobalamin biosynthesis; sirohydrochlorin from precorrin-2: step 1/1.</text>
</comment>
<comment type="pathway">
    <text evidence="1">Porphyrin-containing compound metabolism; siroheme biosynthesis; precorrin-2 from uroporphyrinogen III: step 1/1.</text>
</comment>
<comment type="pathway">
    <text evidence="1">Porphyrin-containing compound metabolism; siroheme biosynthesis; siroheme from sirohydrochlorin: step 1/1.</text>
</comment>
<comment type="pathway">
    <text evidence="1">Porphyrin-containing compound metabolism; siroheme biosynthesis; sirohydrochlorin from precorrin-2: step 1/1.</text>
</comment>
<comment type="similarity">
    <text evidence="1">In the N-terminal section; belongs to the precorrin-2 dehydrogenase / sirohydrochlorin ferrochelatase family.</text>
</comment>
<comment type="similarity">
    <text evidence="1">In the C-terminal section; belongs to the precorrin methyltransferase family.</text>
</comment>
<organism>
    <name type="scientific">Yersinia pestis bv. Antiqua (strain Nepal516)</name>
    <dbReference type="NCBI Taxonomy" id="377628"/>
    <lineage>
        <taxon>Bacteria</taxon>
        <taxon>Pseudomonadati</taxon>
        <taxon>Pseudomonadota</taxon>
        <taxon>Gammaproteobacteria</taxon>
        <taxon>Enterobacterales</taxon>
        <taxon>Yersiniaceae</taxon>
        <taxon>Yersinia</taxon>
    </lineage>
</organism>
<sequence>MDYLPLFADLKQRPVLIVGGGEVAARKIELLHRAGAQVWVVAQTLSSELEQQYQDGRIHWLAQDFLPEQLDNVFLVIAATNDTVLNAAVFAAADQRCILANVVDDQPLCSFIFPSIVDRSPLVVAISSSGQAPVLARILREKLEALLPTRLSDMAAIAGRWRGRVKQHMASMGERRRFWEHAFSGRFASLISRGQLTEAENELQLSLEGQHRALGEVALVGAGPGDAGLLTLRGLQVMQQADVVLYDHLVSPEVLDLVRRDAERICVGKRAGAHSVTQEATNQLLVTLAQQGKRVVRLKGGDPFIFGRGGEELQVVAQAGIPFQVVPGVTAAAGATAYAGIPLTHRDHAQSVTFITGHCRPDGDDLDWQTLARGRQTLAIYMGTVKAAAISQQLIAHGRSSTTPVAVIGRGTRVDQQVLIGTLAQLESLAQQAPTPALLVIGEVVNLHHQIAWFGQQPQTESAISPSVVNLA</sequence>
<reference key="1">
    <citation type="journal article" date="2006" name="J. Bacteriol.">
        <title>Complete genome sequence of Yersinia pestis strains Antiqua and Nepal516: evidence of gene reduction in an emerging pathogen.</title>
        <authorList>
            <person name="Chain P.S.G."/>
            <person name="Hu P."/>
            <person name="Malfatti S.A."/>
            <person name="Radnedge L."/>
            <person name="Larimer F."/>
            <person name="Vergez L.M."/>
            <person name="Worsham P."/>
            <person name="Chu M.C."/>
            <person name="Andersen G.L."/>
        </authorList>
    </citation>
    <scope>NUCLEOTIDE SEQUENCE [LARGE SCALE GENOMIC DNA]</scope>
    <source>
        <strain>Nepal516</strain>
    </source>
</reference>
<reference key="2">
    <citation type="submission" date="2009-04" db="EMBL/GenBank/DDBJ databases">
        <title>Yersinia pestis Nepal516A whole genome shotgun sequencing project.</title>
        <authorList>
            <person name="Plunkett G. III"/>
            <person name="Anderson B.D."/>
            <person name="Baumler D.J."/>
            <person name="Burland V."/>
            <person name="Cabot E.L."/>
            <person name="Glasner J.D."/>
            <person name="Mau B."/>
            <person name="Neeno-Eckwall E."/>
            <person name="Perna N.T."/>
            <person name="Munk A.C."/>
            <person name="Tapia R."/>
            <person name="Green L.D."/>
            <person name="Rogers Y.C."/>
            <person name="Detter J.C."/>
            <person name="Bruce D.C."/>
            <person name="Brettin T.S."/>
        </authorList>
    </citation>
    <scope>NUCLEOTIDE SEQUENCE [LARGE SCALE GENOMIC DNA]</scope>
    <source>
        <strain>Nepal516</strain>
    </source>
</reference>
<protein>
    <recommendedName>
        <fullName evidence="1">Siroheme synthase 1</fullName>
    </recommendedName>
    <domain>
        <recommendedName>
            <fullName evidence="1">Uroporphyrinogen-III C-methyltransferase 1</fullName>
            <shortName evidence="1">Urogen III methylase 1</shortName>
            <ecNumber evidence="1">2.1.1.107</ecNumber>
        </recommendedName>
        <alternativeName>
            <fullName evidence="1">SUMT 1</fullName>
        </alternativeName>
        <alternativeName>
            <fullName evidence="1">Uroporphyrinogen III methylase 1</fullName>
            <shortName evidence="1">UROM 1</shortName>
        </alternativeName>
    </domain>
    <domain>
        <recommendedName>
            <fullName evidence="1">Precorrin-2 dehydrogenase 1</fullName>
            <ecNumber evidence="1">1.3.1.76</ecNumber>
        </recommendedName>
    </domain>
    <domain>
        <recommendedName>
            <fullName evidence="1">Sirohydrochlorin ferrochelatase 1</fullName>
            <ecNumber evidence="1">4.99.1.4</ecNumber>
        </recommendedName>
    </domain>
</protein>
<name>CYSG1_YERPN</name>
<feature type="chain" id="PRO_0000330574" description="Siroheme synthase 1">
    <location>
        <begin position="1"/>
        <end position="472"/>
    </location>
</feature>
<feature type="region of interest" description="Precorrin-2 dehydrogenase /sirohydrochlorin ferrochelatase" evidence="1">
    <location>
        <begin position="1"/>
        <end position="203"/>
    </location>
</feature>
<feature type="region of interest" description="Uroporphyrinogen-III C-methyltransferase" evidence="1">
    <location>
        <begin position="215"/>
        <end position="472"/>
    </location>
</feature>
<feature type="active site" description="Proton acceptor" evidence="1">
    <location>
        <position position="247"/>
    </location>
</feature>
<feature type="active site" description="Proton donor" evidence="1">
    <location>
        <position position="269"/>
    </location>
</feature>
<feature type="binding site" evidence="1">
    <location>
        <begin position="22"/>
        <end position="23"/>
    </location>
    <ligand>
        <name>NAD(+)</name>
        <dbReference type="ChEBI" id="CHEBI:57540"/>
    </ligand>
</feature>
<feature type="binding site" evidence="1">
    <location>
        <begin position="43"/>
        <end position="44"/>
    </location>
    <ligand>
        <name>NAD(+)</name>
        <dbReference type="ChEBI" id="CHEBI:57540"/>
    </ligand>
</feature>
<feature type="binding site" evidence="1">
    <location>
        <position position="224"/>
    </location>
    <ligand>
        <name>S-adenosyl-L-methionine</name>
        <dbReference type="ChEBI" id="CHEBI:59789"/>
    </ligand>
</feature>
<feature type="binding site" evidence="1">
    <location>
        <begin position="300"/>
        <end position="302"/>
    </location>
    <ligand>
        <name>S-adenosyl-L-methionine</name>
        <dbReference type="ChEBI" id="CHEBI:59789"/>
    </ligand>
</feature>
<feature type="binding site" evidence="1">
    <location>
        <position position="305"/>
    </location>
    <ligand>
        <name>S-adenosyl-L-methionine</name>
        <dbReference type="ChEBI" id="CHEBI:59789"/>
    </ligand>
</feature>
<feature type="binding site" evidence="1">
    <location>
        <begin position="330"/>
        <end position="331"/>
    </location>
    <ligand>
        <name>S-adenosyl-L-methionine</name>
        <dbReference type="ChEBI" id="CHEBI:59789"/>
    </ligand>
</feature>
<feature type="binding site" evidence="1">
    <location>
        <position position="382"/>
    </location>
    <ligand>
        <name>S-adenosyl-L-methionine</name>
        <dbReference type="ChEBI" id="CHEBI:59789"/>
    </ligand>
</feature>
<feature type="binding site" evidence="1">
    <location>
        <position position="411"/>
    </location>
    <ligand>
        <name>S-adenosyl-L-methionine</name>
        <dbReference type="ChEBI" id="CHEBI:59789"/>
    </ligand>
</feature>
<feature type="modified residue" description="Phosphoserine" evidence="1">
    <location>
        <position position="128"/>
    </location>
</feature>
<dbReference type="EC" id="2.1.1.107" evidence="1"/>
<dbReference type="EC" id="1.3.1.76" evidence="1"/>
<dbReference type="EC" id="4.99.1.4" evidence="1"/>
<dbReference type="EMBL" id="CP000305">
    <property type="protein sequence ID" value="ABG17058.1"/>
    <property type="molecule type" value="Genomic_DNA"/>
</dbReference>
<dbReference type="EMBL" id="ACNQ01000007">
    <property type="protein sequence ID" value="EEO77922.1"/>
    <property type="molecule type" value="Genomic_DNA"/>
</dbReference>
<dbReference type="PIR" id="AI0408">
    <property type="entry name" value="AI0408"/>
</dbReference>
<dbReference type="SMR" id="Q1CLS2"/>
<dbReference type="KEGG" id="ypn:YPN_0726"/>
<dbReference type="HOGENOM" id="CLU_011276_2_1_6"/>
<dbReference type="UniPathway" id="UPA00148">
    <property type="reaction ID" value="UER00211"/>
</dbReference>
<dbReference type="UniPathway" id="UPA00148">
    <property type="reaction ID" value="UER00222"/>
</dbReference>
<dbReference type="UniPathway" id="UPA00262">
    <property type="reaction ID" value="UER00211"/>
</dbReference>
<dbReference type="UniPathway" id="UPA00262">
    <property type="reaction ID" value="UER00222"/>
</dbReference>
<dbReference type="UniPathway" id="UPA00262">
    <property type="reaction ID" value="UER00376"/>
</dbReference>
<dbReference type="Proteomes" id="UP000008936">
    <property type="component" value="Chromosome"/>
</dbReference>
<dbReference type="GO" id="GO:0051287">
    <property type="term" value="F:NAD binding"/>
    <property type="evidence" value="ECO:0007669"/>
    <property type="project" value="InterPro"/>
</dbReference>
<dbReference type="GO" id="GO:0043115">
    <property type="term" value="F:precorrin-2 dehydrogenase activity"/>
    <property type="evidence" value="ECO:0007669"/>
    <property type="project" value="UniProtKB-UniRule"/>
</dbReference>
<dbReference type="GO" id="GO:0051266">
    <property type="term" value="F:sirohydrochlorin ferrochelatase activity"/>
    <property type="evidence" value="ECO:0007669"/>
    <property type="project" value="UniProtKB-EC"/>
</dbReference>
<dbReference type="GO" id="GO:0004851">
    <property type="term" value="F:uroporphyrin-III C-methyltransferase activity"/>
    <property type="evidence" value="ECO:0007669"/>
    <property type="project" value="UniProtKB-UniRule"/>
</dbReference>
<dbReference type="GO" id="GO:0009236">
    <property type="term" value="P:cobalamin biosynthetic process"/>
    <property type="evidence" value="ECO:0007669"/>
    <property type="project" value="UniProtKB-UniRule"/>
</dbReference>
<dbReference type="GO" id="GO:0032259">
    <property type="term" value="P:methylation"/>
    <property type="evidence" value="ECO:0007669"/>
    <property type="project" value="UniProtKB-KW"/>
</dbReference>
<dbReference type="GO" id="GO:0019354">
    <property type="term" value="P:siroheme biosynthetic process"/>
    <property type="evidence" value="ECO:0007669"/>
    <property type="project" value="UniProtKB-UniRule"/>
</dbReference>
<dbReference type="CDD" id="cd11642">
    <property type="entry name" value="SUMT"/>
    <property type="match status" value="1"/>
</dbReference>
<dbReference type="FunFam" id="3.30.160.110:FF:000001">
    <property type="entry name" value="Siroheme synthase"/>
    <property type="match status" value="1"/>
</dbReference>
<dbReference type="FunFam" id="3.30.950.10:FF:000001">
    <property type="entry name" value="Siroheme synthase"/>
    <property type="match status" value="1"/>
</dbReference>
<dbReference type="FunFam" id="3.40.1010.10:FF:000001">
    <property type="entry name" value="Siroheme synthase"/>
    <property type="match status" value="1"/>
</dbReference>
<dbReference type="Gene3D" id="3.40.1010.10">
    <property type="entry name" value="Cobalt-precorrin-4 Transmethylase, Domain 1"/>
    <property type="match status" value="1"/>
</dbReference>
<dbReference type="Gene3D" id="3.30.950.10">
    <property type="entry name" value="Methyltransferase, Cobalt-precorrin-4 Transmethylase, Domain 2"/>
    <property type="match status" value="1"/>
</dbReference>
<dbReference type="Gene3D" id="3.40.50.720">
    <property type="entry name" value="NAD(P)-binding Rossmann-like Domain"/>
    <property type="match status" value="1"/>
</dbReference>
<dbReference type="Gene3D" id="1.10.8.210">
    <property type="entry name" value="Sirohaem synthase, dimerisation domain"/>
    <property type="match status" value="1"/>
</dbReference>
<dbReference type="Gene3D" id="3.30.160.110">
    <property type="entry name" value="Siroheme synthase, domain 2"/>
    <property type="match status" value="1"/>
</dbReference>
<dbReference type="HAMAP" id="MF_01646">
    <property type="entry name" value="Siroheme_synth"/>
    <property type="match status" value="1"/>
</dbReference>
<dbReference type="InterPro" id="IPR000878">
    <property type="entry name" value="4pyrrol_Mease"/>
</dbReference>
<dbReference type="InterPro" id="IPR035996">
    <property type="entry name" value="4pyrrol_Methylase_sf"/>
</dbReference>
<dbReference type="InterPro" id="IPR014777">
    <property type="entry name" value="4pyrrole_Mease_sub1"/>
</dbReference>
<dbReference type="InterPro" id="IPR014776">
    <property type="entry name" value="4pyrrole_Mease_sub2"/>
</dbReference>
<dbReference type="InterPro" id="IPR006366">
    <property type="entry name" value="CobA/CysG_C"/>
</dbReference>
<dbReference type="InterPro" id="IPR036291">
    <property type="entry name" value="NAD(P)-bd_dom_sf"/>
</dbReference>
<dbReference type="InterPro" id="IPR050161">
    <property type="entry name" value="Siro_Cobalamin_biosynth"/>
</dbReference>
<dbReference type="InterPro" id="IPR037115">
    <property type="entry name" value="Sirohaem_synt_dimer_dom_sf"/>
</dbReference>
<dbReference type="InterPro" id="IPR012409">
    <property type="entry name" value="Sirohaem_synth"/>
</dbReference>
<dbReference type="InterPro" id="IPR028281">
    <property type="entry name" value="Sirohaem_synthase_central"/>
</dbReference>
<dbReference type="InterPro" id="IPR019478">
    <property type="entry name" value="Sirohaem_synthase_dimer_dom"/>
</dbReference>
<dbReference type="InterPro" id="IPR006367">
    <property type="entry name" value="Sirohaem_synthase_N"/>
</dbReference>
<dbReference type="InterPro" id="IPR003043">
    <property type="entry name" value="Uropor_MeTrfase_CS"/>
</dbReference>
<dbReference type="NCBIfam" id="TIGR01469">
    <property type="entry name" value="cobA_cysG_Cterm"/>
    <property type="match status" value="1"/>
</dbReference>
<dbReference type="NCBIfam" id="TIGR01470">
    <property type="entry name" value="cysG_Nterm"/>
    <property type="match status" value="1"/>
</dbReference>
<dbReference type="NCBIfam" id="NF004790">
    <property type="entry name" value="PRK06136.1"/>
    <property type="match status" value="1"/>
</dbReference>
<dbReference type="NCBIfam" id="NF007922">
    <property type="entry name" value="PRK10637.1"/>
    <property type="match status" value="1"/>
</dbReference>
<dbReference type="PANTHER" id="PTHR45790:SF1">
    <property type="entry name" value="SIROHEME SYNTHASE"/>
    <property type="match status" value="1"/>
</dbReference>
<dbReference type="PANTHER" id="PTHR45790">
    <property type="entry name" value="SIROHEME SYNTHASE-RELATED"/>
    <property type="match status" value="1"/>
</dbReference>
<dbReference type="Pfam" id="PF10414">
    <property type="entry name" value="CysG_dimeriser"/>
    <property type="match status" value="1"/>
</dbReference>
<dbReference type="Pfam" id="PF13241">
    <property type="entry name" value="NAD_binding_7"/>
    <property type="match status" value="1"/>
</dbReference>
<dbReference type="Pfam" id="PF14824">
    <property type="entry name" value="Sirohm_synth_M"/>
    <property type="match status" value="1"/>
</dbReference>
<dbReference type="Pfam" id="PF00590">
    <property type="entry name" value="TP_methylase"/>
    <property type="match status" value="1"/>
</dbReference>
<dbReference type="PIRSF" id="PIRSF036426">
    <property type="entry name" value="Sirohaem_synth"/>
    <property type="match status" value="1"/>
</dbReference>
<dbReference type="SUPFAM" id="SSF51735">
    <property type="entry name" value="NAD(P)-binding Rossmann-fold domains"/>
    <property type="match status" value="1"/>
</dbReference>
<dbReference type="SUPFAM" id="SSF75615">
    <property type="entry name" value="Siroheme synthase middle domains-like"/>
    <property type="match status" value="1"/>
</dbReference>
<dbReference type="SUPFAM" id="SSF53790">
    <property type="entry name" value="Tetrapyrrole methylase"/>
    <property type="match status" value="1"/>
</dbReference>
<dbReference type="PROSITE" id="PS00839">
    <property type="entry name" value="SUMT_1"/>
    <property type="match status" value="1"/>
</dbReference>
<dbReference type="PROSITE" id="PS00840">
    <property type="entry name" value="SUMT_2"/>
    <property type="match status" value="1"/>
</dbReference>
<evidence type="ECO:0000255" key="1">
    <source>
        <dbReference type="HAMAP-Rule" id="MF_01646"/>
    </source>
</evidence>
<keyword id="KW-0169">Cobalamin biosynthesis</keyword>
<keyword id="KW-0456">Lyase</keyword>
<keyword id="KW-0489">Methyltransferase</keyword>
<keyword id="KW-0511">Multifunctional enzyme</keyword>
<keyword id="KW-0520">NAD</keyword>
<keyword id="KW-0560">Oxidoreductase</keyword>
<keyword id="KW-0597">Phosphoprotein</keyword>
<keyword id="KW-0627">Porphyrin biosynthesis</keyword>
<keyword id="KW-0949">S-adenosyl-L-methionine</keyword>
<keyword id="KW-0808">Transferase</keyword>
<proteinExistence type="inferred from homology"/>
<gene>
    <name evidence="1" type="primary">cysG1</name>
    <name type="ordered locus">YPN_0726</name>
    <name type="ORF">YP516_0774</name>
</gene>